<feature type="chain" id="PRO_0000428320" description="Uncharacterized oxidoreductase MT1177">
    <location>
        <begin position="1"/>
        <end position="250"/>
    </location>
</feature>
<feature type="active site" description="Proton acceptor" evidence="3">
    <location>
        <position position="156"/>
    </location>
</feature>
<feature type="binding site" evidence="2">
    <location>
        <position position="15"/>
    </location>
    <ligand>
        <name>NAD(+)</name>
        <dbReference type="ChEBI" id="CHEBI:57540"/>
    </ligand>
</feature>
<feature type="binding site" evidence="2">
    <location>
        <position position="17"/>
    </location>
    <ligand>
        <name>NAD(+)</name>
        <dbReference type="ChEBI" id="CHEBI:57540"/>
    </ligand>
</feature>
<feature type="binding site" evidence="2">
    <location>
        <position position="36"/>
    </location>
    <ligand>
        <name>NAD(+)</name>
        <dbReference type="ChEBI" id="CHEBI:57540"/>
    </ligand>
</feature>
<feature type="binding site" evidence="2">
    <location>
        <position position="56"/>
    </location>
    <ligand>
        <name>NAD(+)</name>
        <dbReference type="ChEBI" id="CHEBI:57540"/>
    </ligand>
</feature>
<feature type="binding site" evidence="2">
    <location>
        <position position="57"/>
    </location>
    <ligand>
        <name>NAD(+)</name>
        <dbReference type="ChEBI" id="CHEBI:57540"/>
    </ligand>
</feature>
<feature type="binding site" evidence="2">
    <location>
        <position position="82"/>
    </location>
    <ligand>
        <name>NAD(+)</name>
        <dbReference type="ChEBI" id="CHEBI:57540"/>
    </ligand>
</feature>
<feature type="binding site" evidence="1">
    <location>
        <position position="143"/>
    </location>
    <ligand>
        <name>substrate</name>
    </ligand>
</feature>
<feature type="binding site" evidence="2">
    <location>
        <position position="156"/>
    </location>
    <ligand>
        <name>NAD(+)</name>
        <dbReference type="ChEBI" id="CHEBI:57540"/>
    </ligand>
</feature>
<feature type="binding site" evidence="2">
    <location>
        <position position="160"/>
    </location>
    <ligand>
        <name>NAD(+)</name>
        <dbReference type="ChEBI" id="CHEBI:57540"/>
    </ligand>
</feature>
<feature type="binding site" evidence="2">
    <location>
        <position position="189"/>
    </location>
    <ligand>
        <name>NAD(+)</name>
        <dbReference type="ChEBI" id="CHEBI:57540"/>
    </ligand>
</feature>
<feature type="binding site" evidence="2">
    <location>
        <position position="191"/>
    </location>
    <ligand>
        <name>NAD(+)</name>
        <dbReference type="ChEBI" id="CHEBI:57540"/>
    </ligand>
</feature>
<organism>
    <name type="scientific">Mycobacterium tuberculosis (strain CDC 1551 / Oshkosh)</name>
    <dbReference type="NCBI Taxonomy" id="83331"/>
    <lineage>
        <taxon>Bacteria</taxon>
        <taxon>Bacillati</taxon>
        <taxon>Actinomycetota</taxon>
        <taxon>Actinomycetes</taxon>
        <taxon>Mycobacteriales</taxon>
        <taxon>Mycobacteriaceae</taxon>
        <taxon>Mycobacterium</taxon>
        <taxon>Mycobacterium tuberculosis complex</taxon>
    </lineage>
</organism>
<dbReference type="EC" id="1.-.-.-"/>
<dbReference type="EMBL" id="AE000516">
    <property type="protein sequence ID" value="AAK45436.1"/>
    <property type="molecule type" value="Genomic_DNA"/>
</dbReference>
<dbReference type="PIR" id="A70554">
    <property type="entry name" value="A70554"/>
</dbReference>
<dbReference type="RefSeq" id="WP_003405961.1">
    <property type="nucleotide sequence ID" value="NZ_KK341227.1"/>
</dbReference>
<dbReference type="SMR" id="P9WGQ6"/>
<dbReference type="KEGG" id="mtc:MT1177"/>
<dbReference type="PATRIC" id="fig|83331.31.peg.1274"/>
<dbReference type="HOGENOM" id="CLU_010194_42_0_11"/>
<dbReference type="Proteomes" id="UP000001020">
    <property type="component" value="Chromosome"/>
</dbReference>
<dbReference type="GO" id="GO:0016491">
    <property type="term" value="F:oxidoreductase activity"/>
    <property type="evidence" value="ECO:0007669"/>
    <property type="project" value="UniProtKB-KW"/>
</dbReference>
<dbReference type="CDD" id="cd05371">
    <property type="entry name" value="HSD10-like_SDR_c"/>
    <property type="match status" value="1"/>
</dbReference>
<dbReference type="FunFam" id="3.40.50.720:FF:000215">
    <property type="entry name" value="3-hydroxyacyl-CoA dehydrogenase type-2"/>
    <property type="match status" value="1"/>
</dbReference>
<dbReference type="Gene3D" id="3.40.50.720">
    <property type="entry name" value="NAD(P)-binding Rossmann-like Domain"/>
    <property type="match status" value="1"/>
</dbReference>
<dbReference type="InterPro" id="IPR036291">
    <property type="entry name" value="NAD(P)-bd_dom_sf"/>
</dbReference>
<dbReference type="InterPro" id="IPR020904">
    <property type="entry name" value="Sc_DH/Rdtase_CS"/>
</dbReference>
<dbReference type="InterPro" id="IPR002347">
    <property type="entry name" value="SDR_fam"/>
</dbReference>
<dbReference type="PANTHER" id="PTHR43658:SF8">
    <property type="entry name" value="17-BETA-HYDROXYSTEROID DEHYDROGENASE 14-RELATED"/>
    <property type="match status" value="1"/>
</dbReference>
<dbReference type="PANTHER" id="PTHR43658">
    <property type="entry name" value="SHORT-CHAIN DEHYDROGENASE/REDUCTASE"/>
    <property type="match status" value="1"/>
</dbReference>
<dbReference type="Pfam" id="PF00106">
    <property type="entry name" value="adh_short"/>
    <property type="match status" value="1"/>
</dbReference>
<dbReference type="PRINTS" id="PR00081">
    <property type="entry name" value="GDHRDH"/>
</dbReference>
<dbReference type="PRINTS" id="PR00080">
    <property type="entry name" value="SDRFAMILY"/>
</dbReference>
<dbReference type="SUPFAM" id="SSF51735">
    <property type="entry name" value="NAD(P)-binding Rossmann-fold domains"/>
    <property type="match status" value="1"/>
</dbReference>
<dbReference type="PROSITE" id="PS00061">
    <property type="entry name" value="ADH_SHORT"/>
    <property type="match status" value="1"/>
</dbReference>
<sequence length="250" mass="25788">MKTKDAVAVVTGGASGLGLATTKRLLDAGAQVVVVDLRGDDVVGGLGDRARFAQADVTDEAAVSNALELADSLGPVRVVVNCAGTGNAIRVLSRDGVFPLAAFRKIVDINLVGTFNVLRLGAERIAKTEPIGEERGVIINTASVAAFDGQIGQAAYSASKGGVVGMTLPIARDLASKLIRVVTIAPGLFDTPLLASLPAEAKASLGQQVPHPSRLGNPDEYGALVLHIIENPMLNGEVIRLDGAIRMAPR</sequence>
<comment type="similarity">
    <text evidence="4">Belongs to the short-chain dehydrogenases/reductases (SDR) family.</text>
</comment>
<reference key="1">
    <citation type="journal article" date="2002" name="J. Bacteriol.">
        <title>Whole-genome comparison of Mycobacterium tuberculosis clinical and laboratory strains.</title>
        <authorList>
            <person name="Fleischmann R.D."/>
            <person name="Alland D."/>
            <person name="Eisen J.A."/>
            <person name="Carpenter L."/>
            <person name="White O."/>
            <person name="Peterson J.D."/>
            <person name="DeBoy R.T."/>
            <person name="Dodson R.J."/>
            <person name="Gwinn M.L."/>
            <person name="Haft D.H."/>
            <person name="Hickey E.K."/>
            <person name="Kolonay J.F."/>
            <person name="Nelson W.C."/>
            <person name="Umayam L.A."/>
            <person name="Ermolaeva M.D."/>
            <person name="Salzberg S.L."/>
            <person name="Delcher A."/>
            <person name="Utterback T.R."/>
            <person name="Weidman J.F."/>
            <person name="Khouri H.M."/>
            <person name="Gill J."/>
            <person name="Mikula A."/>
            <person name="Bishai W."/>
            <person name="Jacobs W.R. Jr."/>
            <person name="Venter J.C."/>
            <person name="Fraser C.M."/>
        </authorList>
    </citation>
    <scope>NUCLEOTIDE SEQUENCE [LARGE SCALE GENOMIC DNA]</scope>
    <source>
        <strain>CDC 1551 / Oshkosh</strain>
    </source>
</reference>
<keyword id="KW-0560">Oxidoreductase</keyword>
<keyword id="KW-1185">Reference proteome</keyword>
<protein>
    <recommendedName>
        <fullName>Uncharacterized oxidoreductase MT1177</fullName>
        <ecNumber>1.-.-.-</ecNumber>
    </recommendedName>
</protein>
<gene>
    <name type="ordered locus">MT1177</name>
</gene>
<accession>P9WGQ6</accession>
<accession>L0T7F6</accession>
<accession>O06544</accession>
<accession>Q7D8R8</accession>
<proteinExistence type="inferred from homology"/>
<name>Y1144_MYCTO</name>
<evidence type="ECO:0000250" key="1"/>
<evidence type="ECO:0000250" key="2">
    <source>
        <dbReference type="UniProtKB" id="Q99714"/>
    </source>
</evidence>
<evidence type="ECO:0000255" key="3">
    <source>
        <dbReference type="PROSITE-ProRule" id="PRU10001"/>
    </source>
</evidence>
<evidence type="ECO:0000305" key="4"/>